<proteinExistence type="inferred from homology"/>
<feature type="chain" id="PRO_1000131564" description="UPF0761 membrane protein YihY">
    <location>
        <begin position="1"/>
        <end position="290"/>
    </location>
</feature>
<feature type="transmembrane region" description="Helical" evidence="1">
    <location>
        <begin position="44"/>
        <end position="64"/>
    </location>
</feature>
<feature type="transmembrane region" description="Helical" evidence="1">
    <location>
        <begin position="104"/>
        <end position="124"/>
    </location>
</feature>
<feature type="transmembrane region" description="Helical" evidence="1">
    <location>
        <begin position="140"/>
        <end position="160"/>
    </location>
</feature>
<feature type="transmembrane region" description="Helical" evidence="1">
    <location>
        <begin position="183"/>
        <end position="203"/>
    </location>
</feature>
<feature type="transmembrane region" description="Helical" evidence="1">
    <location>
        <begin position="210"/>
        <end position="230"/>
    </location>
</feature>
<feature type="transmembrane region" description="Helical" evidence="1">
    <location>
        <begin position="244"/>
        <end position="264"/>
    </location>
</feature>
<keyword id="KW-0997">Cell inner membrane</keyword>
<keyword id="KW-1003">Cell membrane</keyword>
<keyword id="KW-0472">Membrane</keyword>
<keyword id="KW-0812">Transmembrane</keyword>
<keyword id="KW-1133">Transmembrane helix</keyword>
<dbReference type="EMBL" id="CP001113">
    <property type="protein sequence ID" value="ACF63400.1"/>
    <property type="molecule type" value="Genomic_DNA"/>
</dbReference>
<dbReference type="RefSeq" id="WP_000921423.1">
    <property type="nucleotide sequence ID" value="NZ_CCMR01000001.1"/>
</dbReference>
<dbReference type="KEGG" id="see:SNSL254_A4305"/>
<dbReference type="HOGENOM" id="CLU_032288_0_0_6"/>
<dbReference type="Proteomes" id="UP000008824">
    <property type="component" value="Chromosome"/>
</dbReference>
<dbReference type="GO" id="GO:0005886">
    <property type="term" value="C:plasma membrane"/>
    <property type="evidence" value="ECO:0007669"/>
    <property type="project" value="UniProtKB-SubCell"/>
</dbReference>
<dbReference type="HAMAP" id="MF_00672">
    <property type="entry name" value="UPF0761"/>
    <property type="match status" value="1"/>
</dbReference>
<dbReference type="InterPro" id="IPR023679">
    <property type="entry name" value="UPF0761_bac"/>
</dbReference>
<dbReference type="InterPro" id="IPR017039">
    <property type="entry name" value="Virul_fac_BrkB"/>
</dbReference>
<dbReference type="NCBIfam" id="NF002457">
    <property type="entry name" value="PRK01637.1"/>
    <property type="match status" value="1"/>
</dbReference>
<dbReference type="NCBIfam" id="TIGR00765">
    <property type="entry name" value="yihY_not_rbn"/>
    <property type="match status" value="1"/>
</dbReference>
<dbReference type="PANTHER" id="PTHR30213">
    <property type="entry name" value="INNER MEMBRANE PROTEIN YHJD"/>
    <property type="match status" value="1"/>
</dbReference>
<dbReference type="PANTHER" id="PTHR30213:SF0">
    <property type="entry name" value="UPF0761 MEMBRANE PROTEIN YIHY"/>
    <property type="match status" value="1"/>
</dbReference>
<dbReference type="Pfam" id="PF03631">
    <property type="entry name" value="Virul_fac_BrkB"/>
    <property type="match status" value="1"/>
</dbReference>
<dbReference type="PIRSF" id="PIRSF035875">
    <property type="entry name" value="RNase_BN"/>
    <property type="match status" value="1"/>
</dbReference>
<accession>B4SZW9</accession>
<evidence type="ECO:0000255" key="1">
    <source>
        <dbReference type="HAMAP-Rule" id="MF_00672"/>
    </source>
</evidence>
<reference key="1">
    <citation type="journal article" date="2011" name="J. Bacteriol.">
        <title>Comparative genomics of 28 Salmonella enterica isolates: evidence for CRISPR-mediated adaptive sublineage evolution.</title>
        <authorList>
            <person name="Fricke W.F."/>
            <person name="Mammel M.K."/>
            <person name="McDermott P.F."/>
            <person name="Tartera C."/>
            <person name="White D.G."/>
            <person name="Leclerc J.E."/>
            <person name="Ravel J."/>
            <person name="Cebula T.A."/>
        </authorList>
    </citation>
    <scope>NUCLEOTIDE SEQUENCE [LARGE SCALE GENOMIC DNA]</scope>
    <source>
        <strain>SL254</strain>
    </source>
</reference>
<name>YIHY_SALNS</name>
<sequence length="290" mass="32645">MLKTVHQKAGRHTRPVRAWLKLLWQRIDEDNMTTLAGNLAYVSLLSLVPLIAVVFALFAAFPMFSDVSIQLRHFIFANFMPATGDVIQRYIEQFVANSNKMTAVGACGLIVTALLLMYAIDSALNTIWRSKRTRPKVYSFAVYWMILTLGPLLAGASLAISSYLLSLRWASDLNTVIDNVLRILPLLLSWISFWLLYSIVPTTRVPNRDALVGAFVAALLFEAGKKGFALYITMFPSYQLIYGVLAVIPILFVWVYWTWCIVLLGAEITVTLGEYRKLKQAAEQEEADQP</sequence>
<organism>
    <name type="scientific">Salmonella newport (strain SL254)</name>
    <dbReference type="NCBI Taxonomy" id="423368"/>
    <lineage>
        <taxon>Bacteria</taxon>
        <taxon>Pseudomonadati</taxon>
        <taxon>Pseudomonadota</taxon>
        <taxon>Gammaproteobacteria</taxon>
        <taxon>Enterobacterales</taxon>
        <taxon>Enterobacteriaceae</taxon>
        <taxon>Salmonella</taxon>
    </lineage>
</organism>
<gene>
    <name evidence="1" type="primary">yihY</name>
    <name type="ordered locus">SNSL254_A4305</name>
</gene>
<protein>
    <recommendedName>
        <fullName evidence="1">UPF0761 membrane protein YihY</fullName>
    </recommendedName>
</protein>
<comment type="subcellular location">
    <subcellularLocation>
        <location evidence="1">Cell inner membrane</location>
        <topology evidence="1">Multi-pass membrane protein</topology>
    </subcellularLocation>
</comment>
<comment type="similarity">
    <text evidence="1">Belongs to the UPF0761 family.</text>
</comment>